<keyword id="KW-0067">ATP-binding</keyword>
<keyword id="KW-0460">Magnesium</keyword>
<keyword id="KW-0464">Manganese</keyword>
<keyword id="KW-0479">Metal-binding</keyword>
<keyword id="KW-0547">Nucleotide-binding</keyword>
<keyword id="KW-0548">Nucleotidyltransferase</keyword>
<keyword id="KW-0808">Transferase</keyword>
<reference key="1">
    <citation type="journal article" date="2008" name="J. Biotechnol.">
        <title>The genome of Xanthomonas campestris pv. campestris B100 and its use for the reconstruction of metabolic pathways involved in xanthan biosynthesis.</title>
        <authorList>
            <person name="Vorhoelter F.-J."/>
            <person name="Schneiker S."/>
            <person name="Goesmann A."/>
            <person name="Krause L."/>
            <person name="Bekel T."/>
            <person name="Kaiser O."/>
            <person name="Linke B."/>
            <person name="Patschkowski T."/>
            <person name="Rueckert C."/>
            <person name="Schmid J."/>
            <person name="Sidhu V.K."/>
            <person name="Sieber V."/>
            <person name="Tauch A."/>
            <person name="Watt S.A."/>
            <person name="Weisshaar B."/>
            <person name="Becker A."/>
            <person name="Niehaus K."/>
            <person name="Puehler A."/>
        </authorList>
    </citation>
    <scope>NUCLEOTIDE SEQUENCE [LARGE SCALE GENOMIC DNA]</scope>
    <source>
        <strain>B100</strain>
    </source>
</reference>
<feature type="chain" id="PRO_1000132131" description="Protein nucleotidyltransferase YdiU">
    <location>
        <begin position="1"/>
        <end position="518"/>
    </location>
</feature>
<feature type="region of interest" description="Disordered" evidence="2">
    <location>
        <begin position="1"/>
        <end position="23"/>
    </location>
</feature>
<feature type="compositionally biased region" description="Basic and acidic residues" evidence="2">
    <location>
        <begin position="1"/>
        <end position="10"/>
    </location>
</feature>
<feature type="active site" description="Proton acceptor" evidence="1">
    <location>
        <position position="270"/>
    </location>
</feature>
<feature type="binding site" evidence="1">
    <location>
        <position position="100"/>
    </location>
    <ligand>
        <name>ATP</name>
        <dbReference type="ChEBI" id="CHEBI:30616"/>
    </ligand>
</feature>
<feature type="binding site" evidence="1">
    <location>
        <position position="102"/>
    </location>
    <ligand>
        <name>ATP</name>
        <dbReference type="ChEBI" id="CHEBI:30616"/>
    </ligand>
</feature>
<feature type="binding site" evidence="1">
    <location>
        <position position="103"/>
    </location>
    <ligand>
        <name>ATP</name>
        <dbReference type="ChEBI" id="CHEBI:30616"/>
    </ligand>
</feature>
<feature type="binding site" evidence="1">
    <location>
        <position position="123"/>
    </location>
    <ligand>
        <name>ATP</name>
        <dbReference type="ChEBI" id="CHEBI:30616"/>
    </ligand>
</feature>
<feature type="binding site" evidence="1">
    <location>
        <position position="135"/>
    </location>
    <ligand>
        <name>ATP</name>
        <dbReference type="ChEBI" id="CHEBI:30616"/>
    </ligand>
</feature>
<feature type="binding site" evidence="1">
    <location>
        <position position="136"/>
    </location>
    <ligand>
        <name>ATP</name>
        <dbReference type="ChEBI" id="CHEBI:30616"/>
    </ligand>
</feature>
<feature type="binding site" evidence="1">
    <location>
        <position position="193"/>
    </location>
    <ligand>
        <name>ATP</name>
        <dbReference type="ChEBI" id="CHEBI:30616"/>
    </ligand>
</feature>
<feature type="binding site" evidence="1">
    <location>
        <position position="200"/>
    </location>
    <ligand>
        <name>ATP</name>
        <dbReference type="ChEBI" id="CHEBI:30616"/>
    </ligand>
</feature>
<feature type="binding site" evidence="1">
    <location>
        <position position="271"/>
    </location>
    <ligand>
        <name>Mg(2+)</name>
        <dbReference type="ChEBI" id="CHEBI:18420"/>
    </ligand>
</feature>
<feature type="binding site" evidence="1">
    <location>
        <position position="280"/>
    </location>
    <ligand>
        <name>ATP</name>
        <dbReference type="ChEBI" id="CHEBI:30616"/>
    </ligand>
</feature>
<feature type="binding site" evidence="1">
    <location>
        <position position="280"/>
    </location>
    <ligand>
        <name>Mg(2+)</name>
        <dbReference type="ChEBI" id="CHEBI:18420"/>
    </ligand>
</feature>
<protein>
    <recommendedName>
        <fullName evidence="1">Protein nucleotidyltransferase YdiU</fullName>
        <ecNumber evidence="1">2.7.7.-</ecNumber>
    </recommendedName>
    <alternativeName>
        <fullName evidence="1">Protein adenylyltransferase YdiU</fullName>
        <ecNumber evidence="1">2.7.7.108</ecNumber>
    </alternativeName>
    <alternativeName>
        <fullName evidence="1">Protein uridylyltransferase YdiU</fullName>
        <ecNumber evidence="1">2.7.7.-</ecNumber>
    </alternativeName>
</protein>
<gene>
    <name evidence="1" type="primary">ydiU</name>
    <name evidence="1" type="synonym">selO</name>
    <name type="ordered locus">xcc-b100_1894</name>
</gene>
<evidence type="ECO:0000255" key="1">
    <source>
        <dbReference type="HAMAP-Rule" id="MF_00692"/>
    </source>
</evidence>
<evidence type="ECO:0000256" key="2">
    <source>
        <dbReference type="SAM" id="MobiDB-lite"/>
    </source>
</evidence>
<comment type="function">
    <text evidence="1">Nucleotidyltransferase involved in the post-translational modification of proteins. It can catalyze the addition of adenosine monophosphate (AMP) or uridine monophosphate (UMP) to a protein, resulting in modifications known as AMPylation and UMPylation.</text>
</comment>
<comment type="catalytic activity">
    <reaction evidence="1">
        <text>L-seryl-[protein] + ATP = 3-O-(5'-adenylyl)-L-seryl-[protein] + diphosphate</text>
        <dbReference type="Rhea" id="RHEA:58120"/>
        <dbReference type="Rhea" id="RHEA-COMP:9863"/>
        <dbReference type="Rhea" id="RHEA-COMP:15073"/>
        <dbReference type="ChEBI" id="CHEBI:29999"/>
        <dbReference type="ChEBI" id="CHEBI:30616"/>
        <dbReference type="ChEBI" id="CHEBI:33019"/>
        <dbReference type="ChEBI" id="CHEBI:142516"/>
        <dbReference type="EC" id="2.7.7.108"/>
    </reaction>
</comment>
<comment type="catalytic activity">
    <reaction evidence="1">
        <text>L-threonyl-[protein] + ATP = 3-O-(5'-adenylyl)-L-threonyl-[protein] + diphosphate</text>
        <dbReference type="Rhea" id="RHEA:54292"/>
        <dbReference type="Rhea" id="RHEA-COMP:11060"/>
        <dbReference type="Rhea" id="RHEA-COMP:13847"/>
        <dbReference type="ChEBI" id="CHEBI:30013"/>
        <dbReference type="ChEBI" id="CHEBI:30616"/>
        <dbReference type="ChEBI" id="CHEBI:33019"/>
        <dbReference type="ChEBI" id="CHEBI:138113"/>
        <dbReference type="EC" id="2.7.7.108"/>
    </reaction>
</comment>
<comment type="catalytic activity">
    <reaction evidence="1">
        <text>L-tyrosyl-[protein] + ATP = O-(5'-adenylyl)-L-tyrosyl-[protein] + diphosphate</text>
        <dbReference type="Rhea" id="RHEA:54288"/>
        <dbReference type="Rhea" id="RHEA-COMP:10136"/>
        <dbReference type="Rhea" id="RHEA-COMP:13846"/>
        <dbReference type="ChEBI" id="CHEBI:30616"/>
        <dbReference type="ChEBI" id="CHEBI:33019"/>
        <dbReference type="ChEBI" id="CHEBI:46858"/>
        <dbReference type="ChEBI" id="CHEBI:83624"/>
        <dbReference type="EC" id="2.7.7.108"/>
    </reaction>
</comment>
<comment type="catalytic activity">
    <reaction evidence="1">
        <text>L-histidyl-[protein] + UTP = N(tele)-(5'-uridylyl)-L-histidyl-[protein] + diphosphate</text>
        <dbReference type="Rhea" id="RHEA:83891"/>
        <dbReference type="Rhea" id="RHEA-COMP:9745"/>
        <dbReference type="Rhea" id="RHEA-COMP:20239"/>
        <dbReference type="ChEBI" id="CHEBI:29979"/>
        <dbReference type="ChEBI" id="CHEBI:33019"/>
        <dbReference type="ChEBI" id="CHEBI:46398"/>
        <dbReference type="ChEBI" id="CHEBI:233474"/>
    </reaction>
</comment>
<comment type="catalytic activity">
    <reaction evidence="1">
        <text>L-seryl-[protein] + UTP = O-(5'-uridylyl)-L-seryl-[protein] + diphosphate</text>
        <dbReference type="Rhea" id="RHEA:64604"/>
        <dbReference type="Rhea" id="RHEA-COMP:9863"/>
        <dbReference type="Rhea" id="RHEA-COMP:16635"/>
        <dbReference type="ChEBI" id="CHEBI:29999"/>
        <dbReference type="ChEBI" id="CHEBI:33019"/>
        <dbReference type="ChEBI" id="CHEBI:46398"/>
        <dbReference type="ChEBI" id="CHEBI:156051"/>
    </reaction>
</comment>
<comment type="catalytic activity">
    <reaction evidence="1">
        <text>L-tyrosyl-[protein] + UTP = O-(5'-uridylyl)-L-tyrosyl-[protein] + diphosphate</text>
        <dbReference type="Rhea" id="RHEA:83887"/>
        <dbReference type="Rhea" id="RHEA-COMP:10136"/>
        <dbReference type="Rhea" id="RHEA-COMP:20238"/>
        <dbReference type="ChEBI" id="CHEBI:33019"/>
        <dbReference type="ChEBI" id="CHEBI:46398"/>
        <dbReference type="ChEBI" id="CHEBI:46858"/>
        <dbReference type="ChEBI" id="CHEBI:90602"/>
    </reaction>
</comment>
<comment type="cofactor">
    <cofactor evidence="1">
        <name>Mg(2+)</name>
        <dbReference type="ChEBI" id="CHEBI:18420"/>
    </cofactor>
    <cofactor evidence="1">
        <name>Mn(2+)</name>
        <dbReference type="ChEBI" id="CHEBI:29035"/>
    </cofactor>
</comment>
<comment type="similarity">
    <text evidence="1">Belongs to the SELO family.</text>
</comment>
<name>SELO_XANCB</name>
<accession>B0RS12</accession>
<sequence>MTHLQFDNRLRAQLPGDPEQGPRRREVLAAWSAVRPTPVAAPTLLAYSADVAQRLGLRAEDLASPQFAEVFGGNALYPGMQPWAVNYGGHQFGHWAGQLGDGRAISLGEAIGVDGGRYELQLKGAGPTPYSRGADGRAVLRSSIREFLCSEAMHYLGVPTTRALSLVGTGDAVVRDMFYDGHPRREPGAIVCRVAPSFIRFGNFELPAARGDVDLLRQWVDFTLARDFPDLPGSGEDRIAAWFGQVCERTAVMVAHWMRVGFVHGVMNTDNMSILGLTIDYGPYGWVDDYDPDWTPNTTDAQGRRYRFGTQPQVAYWNLGRLAQALSPLFGDAASLQAGLDQFRDTYLACDRRDTAAKLGLAECQDEDLHLIDDLRALMREAEMDMTLTFRGLVDLSPQQPDASVLREAFYDETKRAAQAPALGAWLQRYAARCLQDGASDAVRASRMRAANPRYVLRNYLAQQAIDQAEQGDLSGVHALLEVMQRPYDDQPRRESFAAKRPDWARDRAGCSMLSCSS</sequence>
<organism>
    <name type="scientific">Xanthomonas campestris pv. campestris (strain B100)</name>
    <dbReference type="NCBI Taxonomy" id="509169"/>
    <lineage>
        <taxon>Bacteria</taxon>
        <taxon>Pseudomonadati</taxon>
        <taxon>Pseudomonadota</taxon>
        <taxon>Gammaproteobacteria</taxon>
        <taxon>Lysobacterales</taxon>
        <taxon>Lysobacteraceae</taxon>
        <taxon>Xanthomonas</taxon>
    </lineage>
</organism>
<dbReference type="EC" id="2.7.7.-" evidence="1"/>
<dbReference type="EC" id="2.7.7.108" evidence="1"/>
<dbReference type="EMBL" id="AM920689">
    <property type="protein sequence ID" value="CAP51247.1"/>
    <property type="molecule type" value="Genomic_DNA"/>
</dbReference>
<dbReference type="SMR" id="B0RS12"/>
<dbReference type="KEGG" id="xca:xcc-b100_1894"/>
<dbReference type="HOGENOM" id="CLU_010245_4_0_6"/>
<dbReference type="Proteomes" id="UP000001188">
    <property type="component" value="Chromosome"/>
</dbReference>
<dbReference type="GO" id="GO:0070733">
    <property type="term" value="F:AMPylase activity"/>
    <property type="evidence" value="ECO:0007669"/>
    <property type="project" value="TreeGrafter"/>
</dbReference>
<dbReference type="GO" id="GO:0005524">
    <property type="term" value="F:ATP binding"/>
    <property type="evidence" value="ECO:0007669"/>
    <property type="project" value="UniProtKB-UniRule"/>
</dbReference>
<dbReference type="GO" id="GO:0000287">
    <property type="term" value="F:magnesium ion binding"/>
    <property type="evidence" value="ECO:0007669"/>
    <property type="project" value="UniProtKB-UniRule"/>
</dbReference>
<dbReference type="HAMAP" id="MF_00692">
    <property type="entry name" value="YdiU_SelO"/>
    <property type="match status" value="1"/>
</dbReference>
<dbReference type="InterPro" id="IPR003846">
    <property type="entry name" value="SelO"/>
</dbReference>
<dbReference type="NCBIfam" id="NF000658">
    <property type="entry name" value="PRK00029.1"/>
    <property type="match status" value="1"/>
</dbReference>
<dbReference type="PANTHER" id="PTHR32057">
    <property type="entry name" value="PROTEIN ADENYLYLTRANSFERASE SELO, MITOCHONDRIAL"/>
    <property type="match status" value="1"/>
</dbReference>
<dbReference type="PANTHER" id="PTHR32057:SF14">
    <property type="entry name" value="PROTEIN ADENYLYLTRANSFERASE SELO, MITOCHONDRIAL"/>
    <property type="match status" value="1"/>
</dbReference>
<dbReference type="Pfam" id="PF02696">
    <property type="entry name" value="SelO"/>
    <property type="match status" value="1"/>
</dbReference>
<proteinExistence type="inferred from homology"/>